<sequence>MPKMKTNRGAAKRFKKTGSGRFKCKHNHLRHILTKKSSKRKRQLGPKFFVSAADHKRVVACLPYA</sequence>
<accession>A0KKP7</accession>
<keyword id="KW-1185">Reference proteome</keyword>
<keyword id="KW-0687">Ribonucleoprotein</keyword>
<keyword id="KW-0689">Ribosomal protein</keyword>
<dbReference type="EMBL" id="CP000462">
    <property type="protein sequence ID" value="ABK36576.1"/>
    <property type="molecule type" value="Genomic_DNA"/>
</dbReference>
<dbReference type="RefSeq" id="WP_005300673.1">
    <property type="nucleotide sequence ID" value="NC_008570.1"/>
</dbReference>
<dbReference type="RefSeq" id="YP_856848.1">
    <property type="nucleotide sequence ID" value="NC_008570.1"/>
</dbReference>
<dbReference type="SMR" id="A0KKP7"/>
<dbReference type="STRING" id="380703.AHA_2325"/>
<dbReference type="EnsemblBacteria" id="ABK36576">
    <property type="protein sequence ID" value="ABK36576"/>
    <property type="gene ID" value="AHA_2325"/>
</dbReference>
<dbReference type="GeneID" id="97855737"/>
<dbReference type="KEGG" id="aha:AHA_2325"/>
<dbReference type="PATRIC" id="fig|380703.7.peg.2326"/>
<dbReference type="eggNOG" id="COG0291">
    <property type="taxonomic scope" value="Bacteria"/>
</dbReference>
<dbReference type="HOGENOM" id="CLU_169643_1_1_6"/>
<dbReference type="OrthoDB" id="47476at2"/>
<dbReference type="PRO" id="PR:A0KKP7"/>
<dbReference type="Proteomes" id="UP000000756">
    <property type="component" value="Chromosome"/>
</dbReference>
<dbReference type="GO" id="GO:0022625">
    <property type="term" value="C:cytosolic large ribosomal subunit"/>
    <property type="evidence" value="ECO:0007669"/>
    <property type="project" value="TreeGrafter"/>
</dbReference>
<dbReference type="GO" id="GO:0003735">
    <property type="term" value="F:structural constituent of ribosome"/>
    <property type="evidence" value="ECO:0007669"/>
    <property type="project" value="InterPro"/>
</dbReference>
<dbReference type="GO" id="GO:0006412">
    <property type="term" value="P:translation"/>
    <property type="evidence" value="ECO:0007669"/>
    <property type="project" value="UniProtKB-UniRule"/>
</dbReference>
<dbReference type="FunFam" id="4.10.410.60:FF:000001">
    <property type="entry name" value="50S ribosomal protein L35"/>
    <property type="match status" value="1"/>
</dbReference>
<dbReference type="Gene3D" id="4.10.410.60">
    <property type="match status" value="1"/>
</dbReference>
<dbReference type="HAMAP" id="MF_00514">
    <property type="entry name" value="Ribosomal_bL35"/>
    <property type="match status" value="1"/>
</dbReference>
<dbReference type="InterPro" id="IPR001706">
    <property type="entry name" value="Ribosomal_bL35"/>
</dbReference>
<dbReference type="InterPro" id="IPR021137">
    <property type="entry name" value="Ribosomal_bL35-like"/>
</dbReference>
<dbReference type="InterPro" id="IPR018265">
    <property type="entry name" value="Ribosomal_bL35_CS"/>
</dbReference>
<dbReference type="InterPro" id="IPR037229">
    <property type="entry name" value="Ribosomal_bL35_sf"/>
</dbReference>
<dbReference type="NCBIfam" id="TIGR00001">
    <property type="entry name" value="rpmI_bact"/>
    <property type="match status" value="1"/>
</dbReference>
<dbReference type="PANTHER" id="PTHR33343">
    <property type="entry name" value="54S RIBOSOMAL PROTEIN BL35M"/>
    <property type="match status" value="1"/>
</dbReference>
<dbReference type="PANTHER" id="PTHR33343:SF1">
    <property type="entry name" value="LARGE RIBOSOMAL SUBUNIT PROTEIN BL35M"/>
    <property type="match status" value="1"/>
</dbReference>
<dbReference type="Pfam" id="PF01632">
    <property type="entry name" value="Ribosomal_L35p"/>
    <property type="match status" value="1"/>
</dbReference>
<dbReference type="PRINTS" id="PR00064">
    <property type="entry name" value="RIBOSOMALL35"/>
</dbReference>
<dbReference type="SUPFAM" id="SSF143034">
    <property type="entry name" value="L35p-like"/>
    <property type="match status" value="1"/>
</dbReference>
<dbReference type="PROSITE" id="PS00936">
    <property type="entry name" value="RIBOSOMAL_L35"/>
    <property type="match status" value="1"/>
</dbReference>
<protein>
    <recommendedName>
        <fullName evidence="1">Large ribosomal subunit protein bL35</fullName>
    </recommendedName>
    <alternativeName>
        <fullName evidence="2">50S ribosomal protein L35</fullName>
    </alternativeName>
</protein>
<comment type="similarity">
    <text evidence="1">Belongs to the bacterial ribosomal protein bL35 family.</text>
</comment>
<feature type="chain" id="PRO_1000050650" description="Large ribosomal subunit protein bL35">
    <location>
        <begin position="1"/>
        <end position="65"/>
    </location>
</feature>
<gene>
    <name evidence="1" type="primary">rpmI</name>
    <name type="ordered locus">AHA_2325</name>
</gene>
<organism>
    <name type="scientific">Aeromonas hydrophila subsp. hydrophila (strain ATCC 7966 / DSM 30187 / BCRC 13018 / CCUG 14551 / JCM 1027 / KCTC 2358 / NCIMB 9240 / NCTC 8049)</name>
    <dbReference type="NCBI Taxonomy" id="380703"/>
    <lineage>
        <taxon>Bacteria</taxon>
        <taxon>Pseudomonadati</taxon>
        <taxon>Pseudomonadota</taxon>
        <taxon>Gammaproteobacteria</taxon>
        <taxon>Aeromonadales</taxon>
        <taxon>Aeromonadaceae</taxon>
        <taxon>Aeromonas</taxon>
    </lineage>
</organism>
<name>RL35_AERHH</name>
<evidence type="ECO:0000255" key="1">
    <source>
        <dbReference type="HAMAP-Rule" id="MF_00514"/>
    </source>
</evidence>
<evidence type="ECO:0000305" key="2"/>
<reference key="1">
    <citation type="journal article" date="2006" name="J. Bacteriol.">
        <title>Genome sequence of Aeromonas hydrophila ATCC 7966T: jack of all trades.</title>
        <authorList>
            <person name="Seshadri R."/>
            <person name="Joseph S.W."/>
            <person name="Chopra A.K."/>
            <person name="Sha J."/>
            <person name="Shaw J."/>
            <person name="Graf J."/>
            <person name="Haft D.H."/>
            <person name="Wu M."/>
            <person name="Ren Q."/>
            <person name="Rosovitz M.J."/>
            <person name="Madupu R."/>
            <person name="Tallon L."/>
            <person name="Kim M."/>
            <person name="Jin S."/>
            <person name="Vuong H."/>
            <person name="Stine O.C."/>
            <person name="Ali A."/>
            <person name="Horneman A.J."/>
            <person name="Heidelberg J.F."/>
        </authorList>
    </citation>
    <scope>NUCLEOTIDE SEQUENCE [LARGE SCALE GENOMIC DNA]</scope>
    <source>
        <strain>ATCC 7966 / DSM 30187 / BCRC 13018 / CCUG 14551 / JCM 1027 / KCTC 2358 / NCIMB 9240 / NCTC 8049</strain>
    </source>
</reference>
<proteinExistence type="inferred from homology"/>